<accession>D2Y282</accession>
<proteinExistence type="evidence at transcript level"/>
<name>H16L1_CYRHA</name>
<keyword id="KW-1015">Disulfide bond</keyword>
<keyword id="KW-0872">Ion channel impairing toxin</keyword>
<keyword id="KW-0960">Knottin</keyword>
<keyword id="KW-0964">Secreted</keyword>
<keyword id="KW-0732">Signal</keyword>
<keyword id="KW-0800">Toxin</keyword>
<comment type="function">
    <text evidence="1">Probable ion channel inhibitor.</text>
</comment>
<comment type="subcellular location">
    <subcellularLocation>
        <location evidence="1">Secreted</location>
    </subcellularLocation>
</comment>
<comment type="tissue specificity">
    <text>Expressed by the venom gland.</text>
</comment>
<comment type="domain">
    <text evidence="1">The presence of a 'disulfide through disulfide knot' structurally defines this protein as a knottin.</text>
</comment>
<comment type="similarity">
    <text evidence="3">Belongs to the neurotoxin 14 (magi-1) family. 01 (HNTX-16) subfamily.</text>
</comment>
<comment type="caution">
    <text evidence="3">While it is structurally defined as a knottin it lacks the conserved Cys residue in position 90.</text>
</comment>
<feature type="signal peptide" evidence="2">
    <location>
        <begin position="1"/>
        <end position="21"/>
    </location>
</feature>
<feature type="propeptide" id="PRO_0000400939" evidence="1">
    <location>
        <begin position="22"/>
        <end position="74"/>
    </location>
</feature>
<feature type="peptide" id="PRO_0000400940" description="U11-theraphotoxin-Hhn1l">
    <location>
        <begin position="75"/>
        <end position="113"/>
    </location>
</feature>
<feature type="disulfide bond" evidence="1">
    <location>
        <begin position="82"/>
        <end position="95"/>
    </location>
</feature>
<feature type="disulfide bond" evidence="1">
    <location>
        <begin position="89"/>
        <end position="110"/>
    </location>
</feature>
<reference key="1">
    <citation type="journal article" date="2010" name="J. Proteome Res.">
        <title>Molecular diversification of peptide toxins from the tarantula Haplopelma hainanum (Ornithoctonus hainana) venom based on transcriptomic, peptidomic, and genomic analyses.</title>
        <authorList>
            <person name="Tang X."/>
            <person name="Zhang Y."/>
            <person name="Hu W."/>
            <person name="Xu D."/>
            <person name="Tao H."/>
            <person name="Yang X."/>
            <person name="Li Y."/>
            <person name="Jiang L."/>
            <person name="Liang S."/>
        </authorList>
    </citation>
    <scope>NUCLEOTIDE SEQUENCE [LARGE SCALE MRNA]</scope>
    <source>
        <tissue>Venom gland</tissue>
    </source>
</reference>
<organism>
    <name type="scientific">Cyriopagopus hainanus</name>
    <name type="common">Chinese bird spider</name>
    <name type="synonym">Haplopelma hainanum</name>
    <dbReference type="NCBI Taxonomy" id="209901"/>
    <lineage>
        <taxon>Eukaryota</taxon>
        <taxon>Metazoa</taxon>
        <taxon>Ecdysozoa</taxon>
        <taxon>Arthropoda</taxon>
        <taxon>Chelicerata</taxon>
        <taxon>Arachnida</taxon>
        <taxon>Araneae</taxon>
        <taxon>Mygalomorphae</taxon>
        <taxon>Theraphosidae</taxon>
        <taxon>Haplopelma</taxon>
    </lineage>
</organism>
<protein>
    <recommendedName>
        <fullName>U11-theraphotoxin-Hhn1l</fullName>
        <shortName>U11-TRTX-Hhn1l</shortName>
    </recommendedName>
    <alternativeName>
        <fullName>Hainantoxin-XVI-12</fullName>
        <shortName>HNTX-XVI-12</shortName>
    </alternativeName>
</protein>
<evidence type="ECO:0000250" key="1"/>
<evidence type="ECO:0000255" key="2"/>
<evidence type="ECO:0000305" key="3"/>
<sequence length="113" mass="12844">MNTGRVTFLVVFLVAVSLGPADKEENPMEMQEKTQQGKNYLNFGENLVVPKLEELKAKLVEKESKKSKNSRQKRCIGEGVACDENDPRCWSGLICPKPTLPGIWDKSYYCYKK</sequence>
<dbReference type="EMBL" id="GU292959">
    <property type="protein sequence ID" value="ADB56775.1"/>
    <property type="molecule type" value="mRNA"/>
</dbReference>
<dbReference type="ArachnoServer" id="AS001497">
    <property type="toxin name" value="U11-theraphotoxin-Hhn1l"/>
</dbReference>
<dbReference type="GO" id="GO:0005576">
    <property type="term" value="C:extracellular region"/>
    <property type="evidence" value="ECO:0007669"/>
    <property type="project" value="UniProtKB-SubCell"/>
</dbReference>
<dbReference type="GO" id="GO:0099106">
    <property type="term" value="F:ion channel regulator activity"/>
    <property type="evidence" value="ECO:0007669"/>
    <property type="project" value="UniProtKB-KW"/>
</dbReference>
<dbReference type="GO" id="GO:0090729">
    <property type="term" value="F:toxin activity"/>
    <property type="evidence" value="ECO:0007669"/>
    <property type="project" value="UniProtKB-KW"/>
</dbReference>